<protein>
    <recommendedName>
        <fullName evidence="1">Probable dual-specificity RNA methyltransferase RlmN</fullName>
        <ecNumber evidence="1">2.1.1.192</ecNumber>
    </recommendedName>
    <alternativeName>
        <fullName evidence="1">23S rRNA (adenine(2503)-C(2))-methyltransferase</fullName>
    </alternativeName>
    <alternativeName>
        <fullName evidence="1">23S rRNA m2A2503 methyltransferase</fullName>
    </alternativeName>
    <alternativeName>
        <fullName evidence="1">Ribosomal RNA large subunit methyltransferase N</fullName>
    </alternativeName>
    <alternativeName>
        <fullName evidence="1">tRNA (adenine(37)-C(2))-methyltransferase</fullName>
    </alternativeName>
    <alternativeName>
        <fullName evidence="1">tRNA m2A37 methyltransferase</fullName>
    </alternativeName>
</protein>
<reference key="1">
    <citation type="journal article" date="2005" name="J. Infect. Dis.">
        <title>Genome sequence of a serotype M28 strain of group A Streptococcus: potential new insights into puerperal sepsis and bacterial disease specificity.</title>
        <authorList>
            <person name="Green N.M."/>
            <person name="Zhang S."/>
            <person name="Porcella S.F."/>
            <person name="Nagiec M.J."/>
            <person name="Barbian K.D."/>
            <person name="Beres S.B."/>
            <person name="Lefebvre R.B."/>
            <person name="Musser J.M."/>
        </authorList>
    </citation>
    <scope>NUCLEOTIDE SEQUENCE [LARGE SCALE GENOMIC DNA]</scope>
    <source>
        <strain>MGAS6180</strain>
    </source>
</reference>
<dbReference type="EC" id="2.1.1.192" evidence="1"/>
<dbReference type="EMBL" id="CP000056">
    <property type="protein sequence ID" value="AAX72310.1"/>
    <property type="molecule type" value="Genomic_DNA"/>
</dbReference>
<dbReference type="RefSeq" id="WP_002992788.1">
    <property type="nucleotide sequence ID" value="NC_007296.2"/>
</dbReference>
<dbReference type="SMR" id="Q48SK0"/>
<dbReference type="KEGG" id="spb:M28_Spy1200"/>
<dbReference type="HOGENOM" id="CLU_029101_0_1_9"/>
<dbReference type="GO" id="GO:0005737">
    <property type="term" value="C:cytoplasm"/>
    <property type="evidence" value="ECO:0007669"/>
    <property type="project" value="UniProtKB-SubCell"/>
</dbReference>
<dbReference type="GO" id="GO:0051539">
    <property type="term" value="F:4 iron, 4 sulfur cluster binding"/>
    <property type="evidence" value="ECO:0007669"/>
    <property type="project" value="UniProtKB-UniRule"/>
</dbReference>
<dbReference type="GO" id="GO:0046872">
    <property type="term" value="F:metal ion binding"/>
    <property type="evidence" value="ECO:0007669"/>
    <property type="project" value="UniProtKB-KW"/>
</dbReference>
<dbReference type="GO" id="GO:0070040">
    <property type="term" value="F:rRNA (adenine(2503)-C2-)-methyltransferase activity"/>
    <property type="evidence" value="ECO:0007669"/>
    <property type="project" value="UniProtKB-UniRule"/>
</dbReference>
<dbReference type="GO" id="GO:0019843">
    <property type="term" value="F:rRNA binding"/>
    <property type="evidence" value="ECO:0007669"/>
    <property type="project" value="UniProtKB-UniRule"/>
</dbReference>
<dbReference type="GO" id="GO:0002935">
    <property type="term" value="F:tRNA (adenine(37)-C2)-methyltransferase activity"/>
    <property type="evidence" value="ECO:0007669"/>
    <property type="project" value="UniProtKB-UniRule"/>
</dbReference>
<dbReference type="GO" id="GO:0000049">
    <property type="term" value="F:tRNA binding"/>
    <property type="evidence" value="ECO:0007669"/>
    <property type="project" value="UniProtKB-UniRule"/>
</dbReference>
<dbReference type="GO" id="GO:0070475">
    <property type="term" value="P:rRNA base methylation"/>
    <property type="evidence" value="ECO:0007669"/>
    <property type="project" value="UniProtKB-UniRule"/>
</dbReference>
<dbReference type="GO" id="GO:0030488">
    <property type="term" value="P:tRNA methylation"/>
    <property type="evidence" value="ECO:0007669"/>
    <property type="project" value="UniProtKB-UniRule"/>
</dbReference>
<dbReference type="CDD" id="cd01335">
    <property type="entry name" value="Radical_SAM"/>
    <property type="match status" value="1"/>
</dbReference>
<dbReference type="FunFam" id="3.20.20.70:FF:000014">
    <property type="entry name" value="Probable dual-specificity RNA methyltransferase RlmN"/>
    <property type="match status" value="1"/>
</dbReference>
<dbReference type="Gene3D" id="1.10.150.530">
    <property type="match status" value="1"/>
</dbReference>
<dbReference type="Gene3D" id="3.20.20.70">
    <property type="entry name" value="Aldolase class I"/>
    <property type="match status" value="1"/>
</dbReference>
<dbReference type="HAMAP" id="MF_01849">
    <property type="entry name" value="RNA_methyltr_RlmN"/>
    <property type="match status" value="1"/>
</dbReference>
<dbReference type="InterPro" id="IPR013785">
    <property type="entry name" value="Aldolase_TIM"/>
</dbReference>
<dbReference type="InterPro" id="IPR040072">
    <property type="entry name" value="Methyltransferase_A"/>
</dbReference>
<dbReference type="InterPro" id="IPR048641">
    <property type="entry name" value="RlmN_N"/>
</dbReference>
<dbReference type="InterPro" id="IPR027492">
    <property type="entry name" value="RNA_MTrfase_RlmN"/>
</dbReference>
<dbReference type="InterPro" id="IPR004383">
    <property type="entry name" value="rRNA_lsu_MTrfase_RlmN/Cfr"/>
</dbReference>
<dbReference type="InterPro" id="IPR007197">
    <property type="entry name" value="rSAM"/>
</dbReference>
<dbReference type="NCBIfam" id="TIGR00048">
    <property type="entry name" value="rRNA_mod_RlmN"/>
    <property type="match status" value="1"/>
</dbReference>
<dbReference type="PANTHER" id="PTHR30544">
    <property type="entry name" value="23S RRNA METHYLTRANSFERASE"/>
    <property type="match status" value="1"/>
</dbReference>
<dbReference type="PANTHER" id="PTHR30544:SF5">
    <property type="entry name" value="RADICAL SAM CORE DOMAIN-CONTAINING PROTEIN"/>
    <property type="match status" value="1"/>
</dbReference>
<dbReference type="Pfam" id="PF04055">
    <property type="entry name" value="Radical_SAM"/>
    <property type="match status" value="1"/>
</dbReference>
<dbReference type="Pfam" id="PF21016">
    <property type="entry name" value="RlmN_N"/>
    <property type="match status" value="1"/>
</dbReference>
<dbReference type="PIRSF" id="PIRSF006004">
    <property type="entry name" value="CHP00048"/>
    <property type="match status" value="1"/>
</dbReference>
<dbReference type="SFLD" id="SFLDF00275">
    <property type="entry name" value="adenosine_C2_methyltransferase"/>
    <property type="match status" value="1"/>
</dbReference>
<dbReference type="SFLD" id="SFLDS00029">
    <property type="entry name" value="Radical_SAM"/>
    <property type="match status" value="1"/>
</dbReference>
<dbReference type="SUPFAM" id="SSF102114">
    <property type="entry name" value="Radical SAM enzymes"/>
    <property type="match status" value="1"/>
</dbReference>
<dbReference type="PROSITE" id="PS51918">
    <property type="entry name" value="RADICAL_SAM"/>
    <property type="match status" value="1"/>
</dbReference>
<organism>
    <name type="scientific">Streptococcus pyogenes serotype M28 (strain MGAS6180)</name>
    <dbReference type="NCBI Taxonomy" id="319701"/>
    <lineage>
        <taxon>Bacteria</taxon>
        <taxon>Bacillati</taxon>
        <taxon>Bacillota</taxon>
        <taxon>Bacilli</taxon>
        <taxon>Lactobacillales</taxon>
        <taxon>Streptococcaceae</taxon>
        <taxon>Streptococcus</taxon>
    </lineage>
</organism>
<keyword id="KW-0004">4Fe-4S</keyword>
<keyword id="KW-0963">Cytoplasm</keyword>
<keyword id="KW-1015">Disulfide bond</keyword>
<keyword id="KW-0408">Iron</keyword>
<keyword id="KW-0411">Iron-sulfur</keyword>
<keyword id="KW-0479">Metal-binding</keyword>
<keyword id="KW-0489">Methyltransferase</keyword>
<keyword id="KW-0698">rRNA processing</keyword>
<keyword id="KW-0949">S-adenosyl-L-methionine</keyword>
<keyword id="KW-0808">Transferase</keyword>
<keyword id="KW-0819">tRNA processing</keyword>
<evidence type="ECO:0000255" key="1">
    <source>
        <dbReference type="HAMAP-Rule" id="MF_01849"/>
    </source>
</evidence>
<evidence type="ECO:0000255" key="2">
    <source>
        <dbReference type="PROSITE-ProRule" id="PRU01266"/>
    </source>
</evidence>
<feature type="chain" id="PRO_0000350463" description="Probable dual-specificity RNA methyltransferase RlmN">
    <location>
        <begin position="1"/>
        <end position="359"/>
    </location>
</feature>
<feature type="domain" description="Radical SAM core" evidence="2">
    <location>
        <begin position="97"/>
        <end position="329"/>
    </location>
</feature>
<feature type="active site" description="Proton acceptor" evidence="1">
    <location>
        <position position="91"/>
    </location>
</feature>
<feature type="active site" description="S-methylcysteine intermediate" evidence="1">
    <location>
        <position position="340"/>
    </location>
</feature>
<feature type="binding site" evidence="1">
    <location>
        <position position="111"/>
    </location>
    <ligand>
        <name>[4Fe-4S] cluster</name>
        <dbReference type="ChEBI" id="CHEBI:49883"/>
        <note>4Fe-4S-S-AdoMet</note>
    </ligand>
</feature>
<feature type="binding site" evidence="1">
    <location>
        <position position="115"/>
    </location>
    <ligand>
        <name>[4Fe-4S] cluster</name>
        <dbReference type="ChEBI" id="CHEBI:49883"/>
        <note>4Fe-4S-S-AdoMet</note>
    </ligand>
</feature>
<feature type="binding site" evidence="1">
    <location>
        <position position="118"/>
    </location>
    <ligand>
        <name>[4Fe-4S] cluster</name>
        <dbReference type="ChEBI" id="CHEBI:49883"/>
        <note>4Fe-4S-S-AdoMet</note>
    </ligand>
</feature>
<feature type="binding site" evidence="1">
    <location>
        <begin position="163"/>
        <end position="164"/>
    </location>
    <ligand>
        <name>S-adenosyl-L-methionine</name>
        <dbReference type="ChEBI" id="CHEBI:59789"/>
    </ligand>
</feature>
<feature type="binding site" evidence="1">
    <location>
        <position position="195"/>
    </location>
    <ligand>
        <name>S-adenosyl-L-methionine</name>
        <dbReference type="ChEBI" id="CHEBI:59789"/>
    </ligand>
</feature>
<feature type="binding site" evidence="1">
    <location>
        <begin position="218"/>
        <end position="220"/>
    </location>
    <ligand>
        <name>S-adenosyl-L-methionine</name>
        <dbReference type="ChEBI" id="CHEBI:59789"/>
    </ligand>
</feature>
<feature type="binding site" evidence="1">
    <location>
        <position position="296"/>
    </location>
    <ligand>
        <name>S-adenosyl-L-methionine</name>
        <dbReference type="ChEBI" id="CHEBI:59789"/>
    </ligand>
</feature>
<feature type="disulfide bond" description="(transient)" evidence="1">
    <location>
        <begin position="104"/>
        <end position="340"/>
    </location>
</feature>
<name>RLMN_STRPM</name>
<proteinExistence type="inferred from homology"/>
<gene>
    <name evidence="1" type="primary">rlmN</name>
    <name type="ordered locus">M28_Spy1200</name>
</gene>
<sequence length="359" mass="41053">MKPSIYSLTRDELIAWAVERGQKQFRATQIWDWLYKKRVQSFEEMTNISKDFVSILNDSFCVNPLKQRVVQESADGTVKYLFELPDGMLIETVLMRQHYGHSVCVTTQVGCNIGCTFCASGLIKKQRDLNSGEITAQIMLVQKYFDDRKQGERVSHVVVMGIGEPFDNYKNVMCFLRVINDDNGLAIGARHITVSTSGLAHKIRDFANEGVQVNLAVSLHAPNNDLRSSIMRVNRSFPLEKLFSAIEYYIEKTNRRVTFEYIMLNEVNDSIKQAQELADLTKTIRKLSYVNLIPYNPVSEHDQYSRSPKERVLAFYDVLKKNGVNCVVRQEHGTDIDAACGQLRSKTMKKDREKVTATK</sequence>
<comment type="function">
    <text evidence="1">Specifically methylates position 2 of adenine 2503 in 23S rRNA and position 2 of adenine 37 in tRNAs.</text>
</comment>
<comment type="catalytic activity">
    <reaction evidence="1">
        <text>adenosine(2503) in 23S rRNA + 2 reduced [2Fe-2S]-[ferredoxin] + 2 S-adenosyl-L-methionine = 2-methyladenosine(2503) in 23S rRNA + 5'-deoxyadenosine + L-methionine + 2 oxidized [2Fe-2S]-[ferredoxin] + S-adenosyl-L-homocysteine</text>
        <dbReference type="Rhea" id="RHEA:42916"/>
        <dbReference type="Rhea" id="RHEA-COMP:10000"/>
        <dbReference type="Rhea" id="RHEA-COMP:10001"/>
        <dbReference type="Rhea" id="RHEA-COMP:10152"/>
        <dbReference type="Rhea" id="RHEA-COMP:10282"/>
        <dbReference type="ChEBI" id="CHEBI:17319"/>
        <dbReference type="ChEBI" id="CHEBI:33737"/>
        <dbReference type="ChEBI" id="CHEBI:33738"/>
        <dbReference type="ChEBI" id="CHEBI:57844"/>
        <dbReference type="ChEBI" id="CHEBI:57856"/>
        <dbReference type="ChEBI" id="CHEBI:59789"/>
        <dbReference type="ChEBI" id="CHEBI:74411"/>
        <dbReference type="ChEBI" id="CHEBI:74497"/>
        <dbReference type="EC" id="2.1.1.192"/>
    </reaction>
</comment>
<comment type="catalytic activity">
    <reaction evidence="1">
        <text>adenosine(37) in tRNA + 2 reduced [2Fe-2S]-[ferredoxin] + 2 S-adenosyl-L-methionine = 2-methyladenosine(37) in tRNA + 5'-deoxyadenosine + L-methionine + 2 oxidized [2Fe-2S]-[ferredoxin] + S-adenosyl-L-homocysteine</text>
        <dbReference type="Rhea" id="RHEA:43332"/>
        <dbReference type="Rhea" id="RHEA-COMP:10000"/>
        <dbReference type="Rhea" id="RHEA-COMP:10001"/>
        <dbReference type="Rhea" id="RHEA-COMP:10162"/>
        <dbReference type="Rhea" id="RHEA-COMP:10485"/>
        <dbReference type="ChEBI" id="CHEBI:17319"/>
        <dbReference type="ChEBI" id="CHEBI:33737"/>
        <dbReference type="ChEBI" id="CHEBI:33738"/>
        <dbReference type="ChEBI" id="CHEBI:57844"/>
        <dbReference type="ChEBI" id="CHEBI:57856"/>
        <dbReference type="ChEBI" id="CHEBI:59789"/>
        <dbReference type="ChEBI" id="CHEBI:74411"/>
        <dbReference type="ChEBI" id="CHEBI:74497"/>
        <dbReference type="EC" id="2.1.1.192"/>
    </reaction>
</comment>
<comment type="cofactor">
    <cofactor evidence="1">
        <name>[4Fe-4S] cluster</name>
        <dbReference type="ChEBI" id="CHEBI:49883"/>
    </cofactor>
    <text evidence="1">Binds 1 [4Fe-4S] cluster. The cluster is coordinated with 3 cysteines and an exchangeable S-adenosyl-L-methionine.</text>
</comment>
<comment type="subcellular location">
    <subcellularLocation>
        <location evidence="1">Cytoplasm</location>
    </subcellularLocation>
</comment>
<comment type="miscellaneous">
    <text evidence="1">Reaction proceeds by a ping-pong mechanism involving intermediate methylation of a conserved cysteine residue.</text>
</comment>
<comment type="similarity">
    <text evidence="1">Belongs to the radical SAM superfamily. RlmN family.</text>
</comment>
<accession>Q48SK0</accession>